<evidence type="ECO:0000255" key="1">
    <source>
        <dbReference type="HAMAP-Rule" id="MF_00539"/>
    </source>
</evidence>
<evidence type="ECO:0000256" key="2">
    <source>
        <dbReference type="SAM" id="MobiDB-lite"/>
    </source>
</evidence>
<evidence type="ECO:0000305" key="3"/>
<accession>Q2S9T2</accession>
<comment type="similarity">
    <text evidence="1">Belongs to the bacterial ribosomal protein bL27 family.</text>
</comment>
<dbReference type="EMBL" id="CP000155">
    <property type="protein sequence ID" value="ABC32592.1"/>
    <property type="molecule type" value="Genomic_DNA"/>
</dbReference>
<dbReference type="RefSeq" id="WP_011399650.1">
    <property type="nucleotide sequence ID" value="NC_007645.1"/>
</dbReference>
<dbReference type="SMR" id="Q2S9T2"/>
<dbReference type="STRING" id="349521.HCH_05940"/>
<dbReference type="KEGG" id="hch:HCH_05940"/>
<dbReference type="eggNOG" id="COG0211">
    <property type="taxonomic scope" value="Bacteria"/>
</dbReference>
<dbReference type="HOGENOM" id="CLU_095424_4_1_6"/>
<dbReference type="OrthoDB" id="9803474at2"/>
<dbReference type="Proteomes" id="UP000000238">
    <property type="component" value="Chromosome"/>
</dbReference>
<dbReference type="GO" id="GO:0022625">
    <property type="term" value="C:cytosolic large ribosomal subunit"/>
    <property type="evidence" value="ECO:0007669"/>
    <property type="project" value="TreeGrafter"/>
</dbReference>
<dbReference type="GO" id="GO:0003735">
    <property type="term" value="F:structural constituent of ribosome"/>
    <property type="evidence" value="ECO:0007669"/>
    <property type="project" value="InterPro"/>
</dbReference>
<dbReference type="GO" id="GO:0006412">
    <property type="term" value="P:translation"/>
    <property type="evidence" value="ECO:0007669"/>
    <property type="project" value="UniProtKB-UniRule"/>
</dbReference>
<dbReference type="FunFam" id="2.40.50.100:FF:000001">
    <property type="entry name" value="50S ribosomal protein L27"/>
    <property type="match status" value="1"/>
</dbReference>
<dbReference type="Gene3D" id="2.40.50.100">
    <property type="match status" value="1"/>
</dbReference>
<dbReference type="HAMAP" id="MF_00539">
    <property type="entry name" value="Ribosomal_bL27"/>
    <property type="match status" value="1"/>
</dbReference>
<dbReference type="InterPro" id="IPR001684">
    <property type="entry name" value="Ribosomal_bL27"/>
</dbReference>
<dbReference type="InterPro" id="IPR018261">
    <property type="entry name" value="Ribosomal_bL27_CS"/>
</dbReference>
<dbReference type="NCBIfam" id="TIGR00062">
    <property type="entry name" value="L27"/>
    <property type="match status" value="1"/>
</dbReference>
<dbReference type="PANTHER" id="PTHR15893:SF0">
    <property type="entry name" value="LARGE RIBOSOMAL SUBUNIT PROTEIN BL27M"/>
    <property type="match status" value="1"/>
</dbReference>
<dbReference type="PANTHER" id="PTHR15893">
    <property type="entry name" value="RIBOSOMAL PROTEIN L27"/>
    <property type="match status" value="1"/>
</dbReference>
<dbReference type="Pfam" id="PF01016">
    <property type="entry name" value="Ribosomal_L27"/>
    <property type="match status" value="1"/>
</dbReference>
<dbReference type="PRINTS" id="PR00063">
    <property type="entry name" value="RIBOSOMALL27"/>
</dbReference>
<dbReference type="SUPFAM" id="SSF110324">
    <property type="entry name" value="Ribosomal L27 protein-like"/>
    <property type="match status" value="1"/>
</dbReference>
<dbReference type="PROSITE" id="PS00831">
    <property type="entry name" value="RIBOSOMAL_L27"/>
    <property type="match status" value="1"/>
</dbReference>
<protein>
    <recommendedName>
        <fullName evidence="1">Large ribosomal subunit protein bL27</fullName>
    </recommendedName>
    <alternativeName>
        <fullName evidence="3">50S ribosomal protein L27</fullName>
    </alternativeName>
</protein>
<proteinExistence type="inferred from homology"/>
<organism>
    <name type="scientific">Hahella chejuensis (strain KCTC 2396)</name>
    <dbReference type="NCBI Taxonomy" id="349521"/>
    <lineage>
        <taxon>Bacteria</taxon>
        <taxon>Pseudomonadati</taxon>
        <taxon>Pseudomonadota</taxon>
        <taxon>Gammaproteobacteria</taxon>
        <taxon>Oceanospirillales</taxon>
        <taxon>Hahellaceae</taxon>
        <taxon>Hahella</taxon>
    </lineage>
</organism>
<reference key="1">
    <citation type="journal article" date="2005" name="Nucleic Acids Res.">
        <title>Genomic blueprint of Hahella chejuensis, a marine microbe producing an algicidal agent.</title>
        <authorList>
            <person name="Jeong H."/>
            <person name="Yim J.H."/>
            <person name="Lee C."/>
            <person name="Choi S.-H."/>
            <person name="Park Y.K."/>
            <person name="Yoon S.H."/>
            <person name="Hur C.-G."/>
            <person name="Kang H.-Y."/>
            <person name="Kim D."/>
            <person name="Lee H.H."/>
            <person name="Park K.H."/>
            <person name="Park S.-H."/>
            <person name="Park H.-S."/>
            <person name="Lee H.K."/>
            <person name="Oh T.K."/>
            <person name="Kim J.F."/>
        </authorList>
    </citation>
    <scope>NUCLEOTIDE SEQUENCE [LARGE SCALE GENOMIC DNA]</scope>
    <source>
        <strain>KCTC 2396</strain>
    </source>
</reference>
<sequence>MAHKKAAGSSRNGRDSESKRLGVKRFGGQFVKAGNILVRQRGTEFHPGENVGCGRDHTLFAKQDGFVKFNVGGPLNRRTVSIVAAE</sequence>
<gene>
    <name evidence="1" type="primary">rpmA</name>
    <name type="ordered locus">HCH_05940</name>
</gene>
<name>RL27_HAHCH</name>
<feature type="chain" id="PRO_1000017494" description="Large ribosomal subunit protein bL27">
    <location>
        <begin position="1"/>
        <end position="86"/>
    </location>
</feature>
<feature type="region of interest" description="Disordered" evidence="2">
    <location>
        <begin position="1"/>
        <end position="21"/>
    </location>
</feature>
<keyword id="KW-1185">Reference proteome</keyword>
<keyword id="KW-0687">Ribonucleoprotein</keyword>
<keyword id="KW-0689">Ribosomal protein</keyword>